<gene>
    <name evidence="1" type="primary">tsf</name>
    <name type="ordered locus">Asuc_0775</name>
</gene>
<feature type="chain" id="PRO_1000071117" description="Elongation factor Ts">
    <location>
        <begin position="1"/>
        <end position="283"/>
    </location>
</feature>
<feature type="region of interest" description="Involved in Mg(2+) ion dislocation from EF-Tu" evidence="1">
    <location>
        <begin position="80"/>
        <end position="83"/>
    </location>
</feature>
<evidence type="ECO:0000255" key="1">
    <source>
        <dbReference type="HAMAP-Rule" id="MF_00050"/>
    </source>
</evidence>
<protein>
    <recommendedName>
        <fullName evidence="1">Elongation factor Ts</fullName>
        <shortName evidence="1">EF-Ts</shortName>
    </recommendedName>
</protein>
<sequence>MAEITASLVKELRERTGAGMMECKKALVEANGDIELAIDNMRKSGQAKAAKKAGRVAAEGVIVARIANGFGVLVEMNCETDFVAKDAGFLGLANEVADFAAANKGTEIEALAAQFEEKRAALVAKIGENMTIRRVQYLDDARASYLHGAKIGVLVAGQGGDEELFKKVAMHVAASRPEYVNPTDVPADVVEHERNIQVDIAMQSGKPREIAEKMVEGRMRKFTGEVSLTGQPFVMDPSQSVGDFLKAAGATVSGFIRFEVGEGIEKVEEDFAAEVAKITGGNA</sequence>
<name>EFTS_ACTSZ</name>
<dbReference type="EMBL" id="CP000746">
    <property type="protein sequence ID" value="ABR74145.1"/>
    <property type="molecule type" value="Genomic_DNA"/>
</dbReference>
<dbReference type="RefSeq" id="WP_012072523.1">
    <property type="nucleotide sequence ID" value="NC_009655.1"/>
</dbReference>
<dbReference type="SMR" id="A6VME8"/>
<dbReference type="STRING" id="339671.Asuc_0775"/>
<dbReference type="KEGG" id="asu:Asuc_0775"/>
<dbReference type="eggNOG" id="COG0264">
    <property type="taxonomic scope" value="Bacteria"/>
</dbReference>
<dbReference type="HOGENOM" id="CLU_047155_0_2_6"/>
<dbReference type="OrthoDB" id="9808348at2"/>
<dbReference type="Proteomes" id="UP000001114">
    <property type="component" value="Chromosome"/>
</dbReference>
<dbReference type="GO" id="GO:0005737">
    <property type="term" value="C:cytoplasm"/>
    <property type="evidence" value="ECO:0007669"/>
    <property type="project" value="UniProtKB-SubCell"/>
</dbReference>
<dbReference type="GO" id="GO:0003746">
    <property type="term" value="F:translation elongation factor activity"/>
    <property type="evidence" value="ECO:0007669"/>
    <property type="project" value="UniProtKB-UniRule"/>
</dbReference>
<dbReference type="CDD" id="cd14275">
    <property type="entry name" value="UBA_EF-Ts"/>
    <property type="match status" value="1"/>
</dbReference>
<dbReference type="FunFam" id="1.10.286.20:FF:000001">
    <property type="entry name" value="Elongation factor Ts"/>
    <property type="match status" value="1"/>
</dbReference>
<dbReference type="FunFam" id="1.10.8.10:FF:000001">
    <property type="entry name" value="Elongation factor Ts"/>
    <property type="match status" value="1"/>
</dbReference>
<dbReference type="FunFam" id="3.30.479.20:FF:000001">
    <property type="entry name" value="Elongation factor Ts"/>
    <property type="match status" value="1"/>
</dbReference>
<dbReference type="Gene3D" id="1.10.286.20">
    <property type="match status" value="1"/>
</dbReference>
<dbReference type="Gene3D" id="1.10.8.10">
    <property type="entry name" value="DNA helicase RuvA subunit, C-terminal domain"/>
    <property type="match status" value="1"/>
</dbReference>
<dbReference type="Gene3D" id="3.30.479.20">
    <property type="entry name" value="Elongation factor Ts, dimerisation domain"/>
    <property type="match status" value="2"/>
</dbReference>
<dbReference type="HAMAP" id="MF_00050">
    <property type="entry name" value="EF_Ts"/>
    <property type="match status" value="1"/>
</dbReference>
<dbReference type="InterPro" id="IPR036402">
    <property type="entry name" value="EF-Ts_dimer_sf"/>
</dbReference>
<dbReference type="InterPro" id="IPR001816">
    <property type="entry name" value="Transl_elong_EFTs/EF1B"/>
</dbReference>
<dbReference type="InterPro" id="IPR014039">
    <property type="entry name" value="Transl_elong_EFTs/EF1B_dimer"/>
</dbReference>
<dbReference type="InterPro" id="IPR018101">
    <property type="entry name" value="Transl_elong_Ts_CS"/>
</dbReference>
<dbReference type="InterPro" id="IPR009060">
    <property type="entry name" value="UBA-like_sf"/>
</dbReference>
<dbReference type="NCBIfam" id="TIGR00116">
    <property type="entry name" value="tsf"/>
    <property type="match status" value="1"/>
</dbReference>
<dbReference type="PANTHER" id="PTHR11741">
    <property type="entry name" value="ELONGATION FACTOR TS"/>
    <property type="match status" value="1"/>
</dbReference>
<dbReference type="PANTHER" id="PTHR11741:SF0">
    <property type="entry name" value="ELONGATION FACTOR TS, MITOCHONDRIAL"/>
    <property type="match status" value="1"/>
</dbReference>
<dbReference type="Pfam" id="PF00889">
    <property type="entry name" value="EF_TS"/>
    <property type="match status" value="1"/>
</dbReference>
<dbReference type="SUPFAM" id="SSF54713">
    <property type="entry name" value="Elongation factor Ts (EF-Ts), dimerisation domain"/>
    <property type="match status" value="2"/>
</dbReference>
<dbReference type="SUPFAM" id="SSF46934">
    <property type="entry name" value="UBA-like"/>
    <property type="match status" value="1"/>
</dbReference>
<dbReference type="PROSITE" id="PS01126">
    <property type="entry name" value="EF_TS_1"/>
    <property type="match status" value="1"/>
</dbReference>
<dbReference type="PROSITE" id="PS01127">
    <property type="entry name" value="EF_TS_2"/>
    <property type="match status" value="1"/>
</dbReference>
<reference key="1">
    <citation type="journal article" date="2010" name="BMC Genomics">
        <title>A genomic perspective on the potential of Actinobacillus succinogenes for industrial succinate production.</title>
        <authorList>
            <person name="McKinlay J.B."/>
            <person name="Laivenieks M."/>
            <person name="Schindler B.D."/>
            <person name="McKinlay A.A."/>
            <person name="Siddaramappa S."/>
            <person name="Challacombe J.F."/>
            <person name="Lowry S.R."/>
            <person name="Clum A."/>
            <person name="Lapidus A.L."/>
            <person name="Burkhart K.B."/>
            <person name="Harkins V."/>
            <person name="Vieille C."/>
        </authorList>
    </citation>
    <scope>NUCLEOTIDE SEQUENCE [LARGE SCALE GENOMIC DNA]</scope>
    <source>
        <strain>ATCC 55618 / DSM 22257 / CCUG 43843 / 130Z</strain>
    </source>
</reference>
<comment type="function">
    <text evidence="1">Associates with the EF-Tu.GDP complex and induces the exchange of GDP to GTP. It remains bound to the aminoacyl-tRNA.EF-Tu.GTP complex up to the GTP hydrolysis stage on the ribosome.</text>
</comment>
<comment type="subcellular location">
    <subcellularLocation>
        <location evidence="1">Cytoplasm</location>
    </subcellularLocation>
</comment>
<comment type="similarity">
    <text evidence="1">Belongs to the EF-Ts family.</text>
</comment>
<organism>
    <name type="scientific">Actinobacillus succinogenes (strain ATCC 55618 / DSM 22257 / CCUG 43843 / 130Z)</name>
    <dbReference type="NCBI Taxonomy" id="339671"/>
    <lineage>
        <taxon>Bacteria</taxon>
        <taxon>Pseudomonadati</taxon>
        <taxon>Pseudomonadota</taxon>
        <taxon>Gammaproteobacteria</taxon>
        <taxon>Pasteurellales</taxon>
        <taxon>Pasteurellaceae</taxon>
        <taxon>Actinobacillus</taxon>
    </lineage>
</organism>
<proteinExistence type="inferred from homology"/>
<keyword id="KW-0963">Cytoplasm</keyword>
<keyword id="KW-0251">Elongation factor</keyword>
<keyword id="KW-0648">Protein biosynthesis</keyword>
<keyword id="KW-1185">Reference proteome</keyword>
<accession>A6VME8</accession>